<dbReference type="EMBL" id="AC027656">
    <property type="protein sequence ID" value="AAF81301.1"/>
    <property type="molecule type" value="Genomic_DNA"/>
</dbReference>
<dbReference type="EMBL" id="CP002684">
    <property type="protein sequence ID" value="AEE29064.1"/>
    <property type="molecule type" value="Genomic_DNA"/>
</dbReference>
<dbReference type="EMBL" id="DQ912183">
    <property type="protein sequence ID" value="ABI34006.1"/>
    <property type="molecule type" value="mRNA"/>
</dbReference>
<dbReference type="EMBL" id="EF182779">
    <property type="status" value="NOT_ANNOTATED_CDS"/>
    <property type="molecule type" value="mRNA"/>
</dbReference>
<dbReference type="PIR" id="A86271">
    <property type="entry name" value="A86271"/>
</dbReference>
<dbReference type="RefSeq" id="NP_001031043.1">
    <property type="nucleotide sequence ID" value="NM_001035966.2"/>
</dbReference>
<dbReference type="SMR" id="Q9LMX3"/>
<dbReference type="PaxDb" id="3702-AT1G13755.1"/>
<dbReference type="ProteomicsDB" id="224086"/>
<dbReference type="EnsemblPlants" id="AT1G13755.1">
    <property type="protein sequence ID" value="AT1G13755.1"/>
    <property type="gene ID" value="AT1G13755"/>
</dbReference>
<dbReference type="GeneID" id="3766724"/>
<dbReference type="Gramene" id="AT1G13755.1">
    <property type="protein sequence ID" value="AT1G13755.1"/>
    <property type="gene ID" value="AT1G13755"/>
</dbReference>
<dbReference type="KEGG" id="ath:AT1G13755"/>
<dbReference type="Araport" id="AT1G13755"/>
<dbReference type="TAIR" id="AT1G13755"/>
<dbReference type="HOGENOM" id="CLU_167100_0_0_1"/>
<dbReference type="InParanoid" id="Q9LMX3"/>
<dbReference type="OMA" id="QGYCKLA"/>
<dbReference type="PhylomeDB" id="Q9LMX3"/>
<dbReference type="PRO" id="PR:Q9LMX3"/>
<dbReference type="Proteomes" id="UP000006548">
    <property type="component" value="Chromosome 1"/>
</dbReference>
<dbReference type="ExpressionAtlas" id="Q9LMX3">
    <property type="expression patterns" value="baseline and differential"/>
</dbReference>
<dbReference type="GO" id="GO:0005576">
    <property type="term" value="C:extracellular region"/>
    <property type="evidence" value="ECO:0007669"/>
    <property type="project" value="UniProtKB-SubCell"/>
</dbReference>
<dbReference type="GO" id="GO:0050832">
    <property type="term" value="P:defense response to fungus"/>
    <property type="evidence" value="ECO:0007669"/>
    <property type="project" value="UniProtKB-KW"/>
</dbReference>
<dbReference type="GO" id="GO:0031640">
    <property type="term" value="P:killing of cells of another organism"/>
    <property type="evidence" value="ECO:0007669"/>
    <property type="project" value="UniProtKB-KW"/>
</dbReference>
<comment type="subcellular location">
    <subcellularLocation>
        <location evidence="1">Secreted</location>
    </subcellularLocation>
</comment>
<comment type="similarity">
    <text evidence="3">Belongs to the DEFL family.</text>
</comment>
<name>DF260_ARATH</name>
<proteinExistence type="inferred from homology"/>
<accession>Q9LMX3</accession>
<evidence type="ECO:0000250" key="1"/>
<evidence type="ECO:0000255" key="2"/>
<evidence type="ECO:0000305" key="3"/>
<feature type="signal peptide" evidence="2">
    <location>
        <begin position="1"/>
        <end position="24"/>
    </location>
</feature>
<feature type="chain" id="PRO_0000379723" description="Defensin-like protein 260">
    <location>
        <begin position="25"/>
        <end position="119"/>
    </location>
</feature>
<feature type="disulfide bond" evidence="1">
    <location>
        <begin position="44"/>
        <end position="99"/>
    </location>
</feature>
<feature type="disulfide bond" evidence="1">
    <location>
        <begin position="63"/>
        <end position="79"/>
    </location>
</feature>
<feature type="disulfide bond" evidence="1">
    <location>
        <begin position="69"/>
        <end position="83"/>
    </location>
</feature>
<feature type="disulfide bond" evidence="1">
    <location>
        <begin position="73"/>
        <end position="85"/>
    </location>
</feature>
<sequence>MKIASLKLLLLVSLLFAVTQNGISIQNSETSVNQNSCMPNEPRCTGCPGGGSGGYRGPPPPCCKNDSDCKAHCPEGGYCSNQCDCVCNLVKVMNNDVRCQVDTDCNMKCSKQGYCKLAS</sequence>
<reference key="1">
    <citation type="journal article" date="2000" name="Nature">
        <title>Sequence and analysis of chromosome 1 of the plant Arabidopsis thaliana.</title>
        <authorList>
            <person name="Theologis A."/>
            <person name="Ecker J.R."/>
            <person name="Palm C.J."/>
            <person name="Federspiel N.A."/>
            <person name="Kaul S."/>
            <person name="White O."/>
            <person name="Alonso J."/>
            <person name="Altafi H."/>
            <person name="Araujo R."/>
            <person name="Bowman C.L."/>
            <person name="Brooks S.Y."/>
            <person name="Buehler E."/>
            <person name="Chan A."/>
            <person name="Chao Q."/>
            <person name="Chen H."/>
            <person name="Cheuk R.F."/>
            <person name="Chin C.W."/>
            <person name="Chung M.K."/>
            <person name="Conn L."/>
            <person name="Conway A.B."/>
            <person name="Conway A.R."/>
            <person name="Creasy T.H."/>
            <person name="Dewar K."/>
            <person name="Dunn P."/>
            <person name="Etgu P."/>
            <person name="Feldblyum T.V."/>
            <person name="Feng J.-D."/>
            <person name="Fong B."/>
            <person name="Fujii C.Y."/>
            <person name="Gill J.E."/>
            <person name="Goldsmith A.D."/>
            <person name="Haas B."/>
            <person name="Hansen N.F."/>
            <person name="Hughes B."/>
            <person name="Huizar L."/>
            <person name="Hunter J.L."/>
            <person name="Jenkins J."/>
            <person name="Johnson-Hopson C."/>
            <person name="Khan S."/>
            <person name="Khaykin E."/>
            <person name="Kim C.J."/>
            <person name="Koo H.L."/>
            <person name="Kremenetskaia I."/>
            <person name="Kurtz D.B."/>
            <person name="Kwan A."/>
            <person name="Lam B."/>
            <person name="Langin-Hooper S."/>
            <person name="Lee A."/>
            <person name="Lee J.M."/>
            <person name="Lenz C.A."/>
            <person name="Li J.H."/>
            <person name="Li Y.-P."/>
            <person name="Lin X."/>
            <person name="Liu S.X."/>
            <person name="Liu Z.A."/>
            <person name="Luros J.S."/>
            <person name="Maiti R."/>
            <person name="Marziali A."/>
            <person name="Militscher J."/>
            <person name="Miranda M."/>
            <person name="Nguyen M."/>
            <person name="Nierman W.C."/>
            <person name="Osborne B.I."/>
            <person name="Pai G."/>
            <person name="Peterson J."/>
            <person name="Pham P.K."/>
            <person name="Rizzo M."/>
            <person name="Rooney T."/>
            <person name="Rowley D."/>
            <person name="Sakano H."/>
            <person name="Salzberg S.L."/>
            <person name="Schwartz J.R."/>
            <person name="Shinn P."/>
            <person name="Southwick A.M."/>
            <person name="Sun H."/>
            <person name="Tallon L.J."/>
            <person name="Tambunga G."/>
            <person name="Toriumi M.J."/>
            <person name="Town C.D."/>
            <person name="Utterback T."/>
            <person name="Van Aken S."/>
            <person name="Vaysberg M."/>
            <person name="Vysotskaia V.S."/>
            <person name="Walker M."/>
            <person name="Wu D."/>
            <person name="Yu G."/>
            <person name="Fraser C.M."/>
            <person name="Venter J.C."/>
            <person name="Davis R.W."/>
        </authorList>
    </citation>
    <scope>NUCLEOTIDE SEQUENCE [LARGE SCALE GENOMIC DNA]</scope>
    <source>
        <strain>cv. Columbia</strain>
    </source>
</reference>
<reference key="2">
    <citation type="journal article" date="2017" name="Plant J.">
        <title>Araport11: a complete reannotation of the Arabidopsis thaliana reference genome.</title>
        <authorList>
            <person name="Cheng C.Y."/>
            <person name="Krishnakumar V."/>
            <person name="Chan A.P."/>
            <person name="Thibaud-Nissen F."/>
            <person name="Schobel S."/>
            <person name="Town C.D."/>
        </authorList>
    </citation>
    <scope>GENOME REANNOTATION</scope>
    <source>
        <strain>cv. Columbia</strain>
    </source>
</reference>
<reference key="3">
    <citation type="journal article" date="2006" name="Plant Biotechnol. J.">
        <title>Simultaneous high-throughput recombinational cloning of open reading frames in closed and open configurations.</title>
        <authorList>
            <person name="Underwood B.A."/>
            <person name="Vanderhaeghen R."/>
            <person name="Whitford R."/>
            <person name="Town C.D."/>
            <person name="Hilson P."/>
        </authorList>
    </citation>
    <scope>NUCLEOTIDE SEQUENCE [LARGE SCALE MRNA]</scope>
    <source>
        <strain>cv. Columbia</strain>
    </source>
</reference>
<reference key="4">
    <citation type="journal article" date="2007" name="Plant J.">
        <title>Small cysteine-rich peptides resembling antimicrobial peptides have been under-predicted in plants.</title>
        <authorList>
            <person name="Silverstein K.A.T."/>
            <person name="Moskal W.A. Jr."/>
            <person name="Wu H.C."/>
            <person name="Underwood B.A."/>
            <person name="Graham M.A."/>
            <person name="Town C.D."/>
            <person name="VandenBosch K.A."/>
        </authorList>
    </citation>
    <scope>NUCLEOTIDE SEQUENCE [LARGE SCALE MRNA]</scope>
    <source>
        <strain>cv. Columbia</strain>
    </source>
</reference>
<reference key="5">
    <citation type="journal article" date="2005" name="Plant Physiol.">
        <title>Genome organization of more than 300 defensin-like genes in Arabidopsis.</title>
        <authorList>
            <person name="Silverstein K.A.T."/>
            <person name="Graham M.A."/>
            <person name="Paape T.D."/>
            <person name="VandenBosch K.A."/>
        </authorList>
    </citation>
    <scope>GENE FAMILY</scope>
</reference>
<keyword id="KW-0929">Antimicrobial</keyword>
<keyword id="KW-1015">Disulfide bond</keyword>
<keyword id="KW-0295">Fungicide</keyword>
<keyword id="KW-0611">Plant defense</keyword>
<keyword id="KW-1185">Reference proteome</keyword>
<keyword id="KW-0964">Secreted</keyword>
<keyword id="KW-0732">Signal</keyword>
<organism>
    <name type="scientific">Arabidopsis thaliana</name>
    <name type="common">Mouse-ear cress</name>
    <dbReference type="NCBI Taxonomy" id="3702"/>
    <lineage>
        <taxon>Eukaryota</taxon>
        <taxon>Viridiplantae</taxon>
        <taxon>Streptophyta</taxon>
        <taxon>Embryophyta</taxon>
        <taxon>Tracheophyta</taxon>
        <taxon>Spermatophyta</taxon>
        <taxon>Magnoliopsida</taxon>
        <taxon>eudicotyledons</taxon>
        <taxon>Gunneridae</taxon>
        <taxon>Pentapetalae</taxon>
        <taxon>rosids</taxon>
        <taxon>malvids</taxon>
        <taxon>Brassicales</taxon>
        <taxon>Brassicaceae</taxon>
        <taxon>Camelineae</taxon>
        <taxon>Arabidopsis</taxon>
    </lineage>
</organism>
<gene>
    <name type="ordered locus">At1g13755</name>
    <name type="ORF">F21F23.19</name>
</gene>
<protein>
    <recommendedName>
        <fullName>Defensin-like protein 260</fullName>
    </recommendedName>
</protein>